<feature type="chain" id="PRO_0000304280" description="Porphobilinogen deaminase">
    <location>
        <begin position="1"/>
        <end position="316"/>
    </location>
</feature>
<feature type="modified residue" description="S-(dipyrrolylmethanemethyl)cysteine" evidence="1">
    <location>
        <position position="245"/>
    </location>
</feature>
<comment type="function">
    <text evidence="1">Tetrapolymerization of the monopyrrole PBG into the hydroxymethylbilane pre-uroporphyrinogen in several discrete steps.</text>
</comment>
<comment type="catalytic activity">
    <reaction evidence="1">
        <text>4 porphobilinogen + H2O = hydroxymethylbilane + 4 NH4(+)</text>
        <dbReference type="Rhea" id="RHEA:13185"/>
        <dbReference type="ChEBI" id="CHEBI:15377"/>
        <dbReference type="ChEBI" id="CHEBI:28938"/>
        <dbReference type="ChEBI" id="CHEBI:57845"/>
        <dbReference type="ChEBI" id="CHEBI:58126"/>
        <dbReference type="EC" id="2.5.1.61"/>
    </reaction>
</comment>
<comment type="cofactor">
    <cofactor evidence="1">
        <name>dipyrromethane</name>
        <dbReference type="ChEBI" id="CHEBI:60342"/>
    </cofactor>
    <text evidence="1">Binds 1 dipyrromethane group covalently.</text>
</comment>
<comment type="pathway">
    <text evidence="1">Porphyrin-containing compound metabolism; protoporphyrin-IX biosynthesis; coproporphyrinogen-III from 5-aminolevulinate: step 2/4.</text>
</comment>
<comment type="pathway">
    <text evidence="1">Porphyrin-containing compound metabolism; chlorophyll biosynthesis.</text>
</comment>
<comment type="subunit">
    <text evidence="1">Monomer.</text>
</comment>
<comment type="miscellaneous">
    <text evidence="1">The porphobilinogen subunits are added to the dipyrromethane group.</text>
</comment>
<comment type="similarity">
    <text evidence="1">Belongs to the HMBS family.</text>
</comment>
<protein>
    <recommendedName>
        <fullName evidence="1">Porphobilinogen deaminase</fullName>
        <shortName evidence="1">PBG</shortName>
        <ecNumber evidence="1">2.5.1.61</ecNumber>
    </recommendedName>
    <alternativeName>
        <fullName evidence="1">Hydroxymethylbilane synthase</fullName>
        <shortName evidence="1">HMBS</shortName>
    </alternativeName>
    <alternativeName>
        <fullName evidence="1">Pre-uroporphyrinogen synthase</fullName>
    </alternativeName>
</protein>
<name>HEM3_SYNS3</name>
<proteinExistence type="inferred from homology"/>
<accession>Q0I8I3</accession>
<dbReference type="EC" id="2.5.1.61" evidence="1"/>
<dbReference type="EMBL" id="CP000435">
    <property type="protein sequence ID" value="ABI45183.1"/>
    <property type="molecule type" value="Genomic_DNA"/>
</dbReference>
<dbReference type="RefSeq" id="WP_011619951.1">
    <property type="nucleotide sequence ID" value="NC_008319.1"/>
</dbReference>
<dbReference type="SMR" id="Q0I8I3"/>
<dbReference type="STRING" id="64471.sync_2036"/>
<dbReference type="KEGG" id="syg:sync_2036"/>
<dbReference type="eggNOG" id="COG0181">
    <property type="taxonomic scope" value="Bacteria"/>
</dbReference>
<dbReference type="HOGENOM" id="CLU_019704_0_2_3"/>
<dbReference type="OrthoDB" id="9810298at2"/>
<dbReference type="UniPathway" id="UPA00251">
    <property type="reaction ID" value="UER00319"/>
</dbReference>
<dbReference type="UniPathway" id="UPA00668"/>
<dbReference type="Proteomes" id="UP000001961">
    <property type="component" value="Chromosome"/>
</dbReference>
<dbReference type="GO" id="GO:0005737">
    <property type="term" value="C:cytoplasm"/>
    <property type="evidence" value="ECO:0007669"/>
    <property type="project" value="TreeGrafter"/>
</dbReference>
<dbReference type="GO" id="GO:0004418">
    <property type="term" value="F:hydroxymethylbilane synthase activity"/>
    <property type="evidence" value="ECO:0007669"/>
    <property type="project" value="UniProtKB-UniRule"/>
</dbReference>
<dbReference type="GO" id="GO:0015995">
    <property type="term" value="P:chlorophyll biosynthetic process"/>
    <property type="evidence" value="ECO:0007669"/>
    <property type="project" value="UniProtKB-UniRule"/>
</dbReference>
<dbReference type="GO" id="GO:0006782">
    <property type="term" value="P:protoporphyrinogen IX biosynthetic process"/>
    <property type="evidence" value="ECO:0007669"/>
    <property type="project" value="UniProtKB-UniRule"/>
</dbReference>
<dbReference type="CDD" id="cd13645">
    <property type="entry name" value="PBP2_HuPBGD_like"/>
    <property type="match status" value="1"/>
</dbReference>
<dbReference type="FunFam" id="3.30.160.40:FF:000002">
    <property type="entry name" value="Porphobilinogen deaminase"/>
    <property type="match status" value="1"/>
</dbReference>
<dbReference type="FunFam" id="3.40.190.10:FF:000004">
    <property type="entry name" value="Porphobilinogen deaminase"/>
    <property type="match status" value="1"/>
</dbReference>
<dbReference type="FunFam" id="3.40.190.10:FF:000005">
    <property type="entry name" value="Porphobilinogen deaminase"/>
    <property type="match status" value="1"/>
</dbReference>
<dbReference type="Gene3D" id="3.40.190.10">
    <property type="entry name" value="Periplasmic binding protein-like II"/>
    <property type="match status" value="2"/>
</dbReference>
<dbReference type="Gene3D" id="3.30.160.40">
    <property type="entry name" value="Porphobilinogen deaminase, C-terminal domain"/>
    <property type="match status" value="1"/>
</dbReference>
<dbReference type="HAMAP" id="MF_00260">
    <property type="entry name" value="Porphobil_deam"/>
    <property type="match status" value="1"/>
</dbReference>
<dbReference type="InterPro" id="IPR000860">
    <property type="entry name" value="HemC"/>
</dbReference>
<dbReference type="InterPro" id="IPR022419">
    <property type="entry name" value="Porphobilin_deaminase_cofac_BS"/>
</dbReference>
<dbReference type="InterPro" id="IPR022417">
    <property type="entry name" value="Porphobilin_deaminase_N"/>
</dbReference>
<dbReference type="InterPro" id="IPR022418">
    <property type="entry name" value="Porphobilinogen_deaminase_C"/>
</dbReference>
<dbReference type="InterPro" id="IPR036803">
    <property type="entry name" value="Porphobilinogen_deaminase_C_sf"/>
</dbReference>
<dbReference type="NCBIfam" id="TIGR00212">
    <property type="entry name" value="hemC"/>
    <property type="match status" value="1"/>
</dbReference>
<dbReference type="PANTHER" id="PTHR11557">
    <property type="entry name" value="PORPHOBILINOGEN DEAMINASE"/>
    <property type="match status" value="1"/>
</dbReference>
<dbReference type="PANTHER" id="PTHR11557:SF0">
    <property type="entry name" value="PORPHOBILINOGEN DEAMINASE"/>
    <property type="match status" value="1"/>
</dbReference>
<dbReference type="Pfam" id="PF01379">
    <property type="entry name" value="Porphobil_deam"/>
    <property type="match status" value="1"/>
</dbReference>
<dbReference type="Pfam" id="PF03900">
    <property type="entry name" value="Porphobil_deamC"/>
    <property type="match status" value="1"/>
</dbReference>
<dbReference type="PIRSF" id="PIRSF001438">
    <property type="entry name" value="4pyrrol_synth_OHMeBilane_synth"/>
    <property type="match status" value="1"/>
</dbReference>
<dbReference type="PRINTS" id="PR00151">
    <property type="entry name" value="PORPHBDMNASE"/>
</dbReference>
<dbReference type="SUPFAM" id="SSF53850">
    <property type="entry name" value="Periplasmic binding protein-like II"/>
    <property type="match status" value="1"/>
</dbReference>
<dbReference type="SUPFAM" id="SSF54782">
    <property type="entry name" value="Porphobilinogen deaminase (hydroxymethylbilane synthase), C-terminal domain"/>
    <property type="match status" value="1"/>
</dbReference>
<dbReference type="PROSITE" id="PS00533">
    <property type="entry name" value="PORPHOBILINOGEN_DEAM"/>
    <property type="match status" value="1"/>
</dbReference>
<keyword id="KW-0149">Chlorophyll biosynthesis</keyword>
<keyword id="KW-0627">Porphyrin biosynthesis</keyword>
<keyword id="KW-1185">Reference proteome</keyword>
<keyword id="KW-0808">Transferase</keyword>
<sequence length="316" mass="34302">MALEHLRIASRRSQLAMVQTNWVKAELEKAHPGLAISVEAMATQGDKILDVALAKIGDKGLFTKELEAQMLVGRAEIAVHSLKDLPTNLPEGLMLGCITEREDPADALVVNSKNAEYTLETLPEGSIVGTSSLRRLAQLRYHYPHLQFKDVRGNVITRLEKLDSGNYDCLILAAAGLSRLGFGDRIHQSIPGNISLHAVGQGALGIECVCDRPEVMELIQVLNHAPTSARCLAERAFLRVLEGGCQVPIGVNTQIEGDTIQLTGMVASLDGKRLIRDEQAGPLADPEAVGRDLAHKLKDQGAGEILQEIFEMERGQ</sequence>
<reference key="1">
    <citation type="journal article" date="2006" name="Proc. Natl. Acad. Sci. U.S.A.">
        <title>Genome sequence of Synechococcus CC9311: insights into adaptation to a coastal environment.</title>
        <authorList>
            <person name="Palenik B."/>
            <person name="Ren Q."/>
            <person name="Dupont C.L."/>
            <person name="Myers G.S."/>
            <person name="Heidelberg J.F."/>
            <person name="Badger J.H."/>
            <person name="Madupu R."/>
            <person name="Nelson W.C."/>
            <person name="Brinkac L.M."/>
            <person name="Dodson R.J."/>
            <person name="Durkin A.S."/>
            <person name="Daugherty S.C."/>
            <person name="Sullivan S.A."/>
            <person name="Khouri H."/>
            <person name="Mohamoud Y."/>
            <person name="Halpin R."/>
            <person name="Paulsen I.T."/>
        </authorList>
    </citation>
    <scope>NUCLEOTIDE SEQUENCE [LARGE SCALE GENOMIC DNA]</scope>
    <source>
        <strain>CC9311</strain>
    </source>
</reference>
<gene>
    <name evidence="1" type="primary">hemC</name>
    <name type="ordered locus">sync_2036</name>
</gene>
<organism>
    <name type="scientific">Synechococcus sp. (strain CC9311)</name>
    <dbReference type="NCBI Taxonomy" id="64471"/>
    <lineage>
        <taxon>Bacteria</taxon>
        <taxon>Bacillati</taxon>
        <taxon>Cyanobacteriota</taxon>
        <taxon>Cyanophyceae</taxon>
        <taxon>Synechococcales</taxon>
        <taxon>Synechococcaceae</taxon>
        <taxon>Synechococcus</taxon>
    </lineage>
</organism>
<evidence type="ECO:0000255" key="1">
    <source>
        <dbReference type="HAMAP-Rule" id="MF_00260"/>
    </source>
</evidence>